<feature type="chain" id="PRO_0000239463" description="Embryonic polyadenylate-binding protein 2-A">
    <location>
        <begin position="1"/>
        <end position="218"/>
    </location>
</feature>
<feature type="domain" description="RRM" evidence="1">
    <location>
        <begin position="93"/>
        <end position="170"/>
    </location>
</feature>
<feature type="region of interest" description="Disordered" evidence="2">
    <location>
        <begin position="1"/>
        <end position="26"/>
    </location>
</feature>
<feature type="region of interest" description="Disordered" evidence="2">
    <location>
        <begin position="169"/>
        <end position="218"/>
    </location>
</feature>
<feature type="compositionally biased region" description="Basic and acidic residues" evidence="2">
    <location>
        <begin position="1"/>
        <end position="16"/>
    </location>
</feature>
<feature type="compositionally biased region" description="Low complexity" evidence="2">
    <location>
        <begin position="205"/>
        <end position="218"/>
    </location>
</feature>
<protein>
    <recommendedName>
        <fullName>Embryonic polyadenylate-binding protein 2-A</fullName>
        <shortName>Embryonic poly(A)-binding protein 2-A</shortName>
        <shortName>XePABP2-A</shortName>
        <shortName>ePABP-2A</shortName>
        <shortName>ePABP2-A</shortName>
    </recommendedName>
    <alternativeName>
        <fullName>Embryonic poly(A)-binding protein type II-A</fullName>
    </alternativeName>
    <alternativeName>
        <fullName>PABPN2</fullName>
    </alternativeName>
    <alternativeName>
        <fullName>p32</fullName>
    </alternativeName>
</protein>
<accession>Q804A5</accession>
<evidence type="ECO:0000255" key="1">
    <source>
        <dbReference type="PROSITE-ProRule" id="PRU00176"/>
    </source>
</evidence>
<evidence type="ECO:0000256" key="2">
    <source>
        <dbReference type="SAM" id="MobiDB-lite"/>
    </source>
</evidence>
<evidence type="ECO:0000269" key="3">
    <source>
    </source>
</evidence>
<evidence type="ECO:0000305" key="4"/>
<evidence type="ECO:0000312" key="5">
    <source>
        <dbReference type="EMBL" id="AAO33927.1"/>
    </source>
</evidence>
<organism>
    <name type="scientific">Xenopus laevis</name>
    <name type="common">African clawed frog</name>
    <dbReference type="NCBI Taxonomy" id="8355"/>
    <lineage>
        <taxon>Eukaryota</taxon>
        <taxon>Metazoa</taxon>
        <taxon>Chordata</taxon>
        <taxon>Craniata</taxon>
        <taxon>Vertebrata</taxon>
        <taxon>Euteleostomi</taxon>
        <taxon>Amphibia</taxon>
        <taxon>Batrachia</taxon>
        <taxon>Anura</taxon>
        <taxon>Pipoidea</taxon>
        <taxon>Pipidae</taxon>
        <taxon>Xenopodinae</taxon>
        <taxon>Xenopus</taxon>
        <taxon>Xenopus</taxon>
    </lineage>
</organism>
<sequence>MSERVSEEPGLDKGDGAEECELDDPELKAIRMRVREMEEEAERLKGLSGQDKSIGVSPRPCMKLIHSKMTAGEYTEGPPRPLSAEEKKEIDKRSVYVGNVDYGGTAQDLEAHFSSCGSINRITILCDKFSGHPKGYAYIEFAERNSVDAAVTMDETVFRGRTIKVLPKRTNMPGISSTDRGGFRGRPRGNRGNYQRGQRPRGRPFRGCGRPGPLNHPY</sequence>
<name>EPA2A_XENLA</name>
<proteinExistence type="evidence at protein level"/>
<gene>
    <name type="primary">Pabpn1l-a</name>
    <name type="synonym">epabp2-a</name>
    <name type="synonym">pabpnl1-a</name>
</gene>
<reference evidence="4 5" key="1">
    <citation type="journal article" date="2004" name="Biol. Cell">
        <title>Identification of a novel Xenopus laevis poly(A) binding protein.</title>
        <authorList>
            <person name="Cosson B."/>
            <person name="Braun F."/>
            <person name="Paillard L."/>
            <person name="Blackshear P."/>
            <person name="Beverley Osborne H."/>
        </authorList>
    </citation>
    <scope>NUCLEOTIDE SEQUENCE [MRNA]</scope>
    <scope>FUNCTION</scope>
    <scope>SUBCELLULAR LOCATION</scope>
    <scope>DEVELOPMENTAL STAGE</scope>
    <source>
        <tissue evidence="3">Embryo</tissue>
    </source>
</reference>
<dbReference type="EMBL" id="AY221506">
    <property type="protein sequence ID" value="AAO33927.1"/>
    <property type="molecule type" value="mRNA"/>
</dbReference>
<dbReference type="RefSeq" id="NP_001082505.1">
    <property type="nucleotide sequence ID" value="NM_001089036.1"/>
</dbReference>
<dbReference type="SMR" id="Q804A5"/>
<dbReference type="DIP" id="DIP-46304N"/>
<dbReference type="GeneID" id="398516"/>
<dbReference type="KEGG" id="xla:398516"/>
<dbReference type="AGR" id="Xenbase:XB-GENE-6256056"/>
<dbReference type="CTD" id="398516"/>
<dbReference type="Xenbase" id="XB-GENE-6256056">
    <property type="gene designation" value="pabpn1l.L"/>
</dbReference>
<dbReference type="OrthoDB" id="4726at2759"/>
<dbReference type="Proteomes" id="UP000186698">
    <property type="component" value="Chromosome 4L"/>
</dbReference>
<dbReference type="Bgee" id="398516">
    <property type="expression patterns" value="Expressed in oocyte and 6 other cell types or tissues"/>
</dbReference>
<dbReference type="GO" id="GO:0005737">
    <property type="term" value="C:cytoplasm"/>
    <property type="evidence" value="ECO:0000314"/>
    <property type="project" value="UniProtKB"/>
</dbReference>
<dbReference type="GO" id="GO:0005634">
    <property type="term" value="C:nucleus"/>
    <property type="evidence" value="ECO:0000318"/>
    <property type="project" value="GO_Central"/>
</dbReference>
<dbReference type="GO" id="GO:0042802">
    <property type="term" value="F:identical protein binding"/>
    <property type="evidence" value="ECO:0000353"/>
    <property type="project" value="IntAct"/>
</dbReference>
<dbReference type="GO" id="GO:0008143">
    <property type="term" value="F:poly(A) binding"/>
    <property type="evidence" value="ECO:0000314"/>
    <property type="project" value="UniProtKB"/>
</dbReference>
<dbReference type="GO" id="GO:0000288">
    <property type="term" value="P:nuclear-transcribed mRNA catabolic process, deadenylation-dependent decay"/>
    <property type="evidence" value="ECO:0000318"/>
    <property type="project" value="GO_Central"/>
</dbReference>
<dbReference type="CDD" id="cd12551">
    <property type="entry name" value="RRM_II_PABPN1L"/>
    <property type="match status" value="1"/>
</dbReference>
<dbReference type="FunFam" id="3.30.70.330:FF:000311">
    <property type="entry name" value="polyadenylate-binding protein 2"/>
    <property type="match status" value="1"/>
</dbReference>
<dbReference type="Gene3D" id="3.30.70.330">
    <property type="match status" value="1"/>
</dbReference>
<dbReference type="InterPro" id="IPR012677">
    <property type="entry name" value="Nucleotide-bd_a/b_plait_sf"/>
</dbReference>
<dbReference type="InterPro" id="IPR035979">
    <property type="entry name" value="RBD_domain_sf"/>
</dbReference>
<dbReference type="InterPro" id="IPR000504">
    <property type="entry name" value="RRM_dom"/>
</dbReference>
<dbReference type="PANTHER" id="PTHR23236:SF27">
    <property type="entry name" value="EMBRYONIC POLYADENYLATE-BINDING PROTEIN 2"/>
    <property type="match status" value="1"/>
</dbReference>
<dbReference type="PANTHER" id="PTHR23236">
    <property type="entry name" value="EUKARYOTIC TRANSLATION INITIATION FACTOR 4B/4H"/>
    <property type="match status" value="1"/>
</dbReference>
<dbReference type="Pfam" id="PF00076">
    <property type="entry name" value="RRM_1"/>
    <property type="match status" value="1"/>
</dbReference>
<dbReference type="SMART" id="SM00360">
    <property type="entry name" value="RRM"/>
    <property type="match status" value="1"/>
</dbReference>
<dbReference type="SUPFAM" id="SSF54928">
    <property type="entry name" value="RNA-binding domain, RBD"/>
    <property type="match status" value="1"/>
</dbReference>
<dbReference type="PROSITE" id="PS50102">
    <property type="entry name" value="RRM"/>
    <property type="match status" value="1"/>
</dbReference>
<keyword id="KW-0963">Cytoplasm</keyword>
<keyword id="KW-1185">Reference proteome</keyword>
<keyword id="KW-0694">RNA-binding</keyword>
<comment type="function">
    <text evidence="3">Binds the poly(A) tail of mRNA. Unable to interact with the cap-binding complex and is therefore unlikely to be involved in translation initiation.</text>
</comment>
<comment type="interaction">
    <interactant intactId="EBI-15731026">
        <id>Q804A5</id>
    </interactant>
    <interactant intactId="EBI-15731026">
        <id>Q804A5</id>
        <label>Pabpn1l-a</label>
    </interactant>
    <organismsDiffer>false</organismsDiffer>
    <experiments>3</experiments>
</comment>
<comment type="subcellular location">
    <subcellularLocation>
        <location evidence="3">Cytoplasm</location>
    </subcellularLocation>
</comment>
<comment type="developmental stage">
    <text evidence="3">Expressed both maternally and zygotically. Restricted to oogenesis and early embryogenesis. During oogenesis, levels increase between stage I and II and then remain constant through oocyte growth to stage VI. During early embryogenesis, levels remain approximately constant up to 5 days after fertilization. In older embryos levels decrease, being totally absent at 15 days post-fertilization (at protein level).</text>
</comment>